<proteinExistence type="inferred from homology"/>
<dbReference type="EC" id="2.7.7.6" evidence="1"/>
<dbReference type="EMBL" id="CP000481">
    <property type="protein sequence ID" value="ABK53064.1"/>
    <property type="molecule type" value="Genomic_DNA"/>
</dbReference>
<dbReference type="RefSeq" id="WP_011720127.1">
    <property type="nucleotide sequence ID" value="NC_008578.1"/>
</dbReference>
<dbReference type="SMR" id="A0LUF4"/>
<dbReference type="FunCoup" id="A0LUF4">
    <property type="interactions" value="6"/>
</dbReference>
<dbReference type="STRING" id="351607.Acel_1292"/>
<dbReference type="KEGG" id="ace:Acel_1292"/>
<dbReference type="eggNOG" id="COG1758">
    <property type="taxonomic scope" value="Bacteria"/>
</dbReference>
<dbReference type="HOGENOM" id="CLU_125406_1_1_11"/>
<dbReference type="InParanoid" id="A0LUF4"/>
<dbReference type="OrthoDB" id="8481372at2"/>
<dbReference type="Proteomes" id="UP000008221">
    <property type="component" value="Chromosome"/>
</dbReference>
<dbReference type="GO" id="GO:0000428">
    <property type="term" value="C:DNA-directed RNA polymerase complex"/>
    <property type="evidence" value="ECO:0007669"/>
    <property type="project" value="UniProtKB-KW"/>
</dbReference>
<dbReference type="GO" id="GO:0003677">
    <property type="term" value="F:DNA binding"/>
    <property type="evidence" value="ECO:0007669"/>
    <property type="project" value="UniProtKB-UniRule"/>
</dbReference>
<dbReference type="GO" id="GO:0003899">
    <property type="term" value="F:DNA-directed RNA polymerase activity"/>
    <property type="evidence" value="ECO:0007669"/>
    <property type="project" value="UniProtKB-UniRule"/>
</dbReference>
<dbReference type="GO" id="GO:0006351">
    <property type="term" value="P:DNA-templated transcription"/>
    <property type="evidence" value="ECO:0007669"/>
    <property type="project" value="UniProtKB-UniRule"/>
</dbReference>
<dbReference type="Gene3D" id="3.90.940.10">
    <property type="match status" value="1"/>
</dbReference>
<dbReference type="HAMAP" id="MF_00366">
    <property type="entry name" value="RNApol_bact_RpoZ"/>
    <property type="match status" value="1"/>
</dbReference>
<dbReference type="InterPro" id="IPR003716">
    <property type="entry name" value="DNA-dir_RNA_pol_omega"/>
</dbReference>
<dbReference type="InterPro" id="IPR006110">
    <property type="entry name" value="Pol_omega/Rpo6/RPB6"/>
</dbReference>
<dbReference type="InterPro" id="IPR036161">
    <property type="entry name" value="RPB6/omega-like_sf"/>
</dbReference>
<dbReference type="NCBIfam" id="TIGR00690">
    <property type="entry name" value="rpoZ"/>
    <property type="match status" value="1"/>
</dbReference>
<dbReference type="PANTHER" id="PTHR34476">
    <property type="entry name" value="DNA-DIRECTED RNA POLYMERASE SUBUNIT OMEGA"/>
    <property type="match status" value="1"/>
</dbReference>
<dbReference type="PANTHER" id="PTHR34476:SF1">
    <property type="entry name" value="DNA-DIRECTED RNA POLYMERASE SUBUNIT OMEGA"/>
    <property type="match status" value="1"/>
</dbReference>
<dbReference type="Pfam" id="PF01192">
    <property type="entry name" value="RNA_pol_Rpb6"/>
    <property type="match status" value="1"/>
</dbReference>
<dbReference type="SMART" id="SM01409">
    <property type="entry name" value="RNA_pol_Rpb6"/>
    <property type="match status" value="1"/>
</dbReference>
<dbReference type="SUPFAM" id="SSF63562">
    <property type="entry name" value="RPB6/omega subunit-like"/>
    <property type="match status" value="1"/>
</dbReference>
<evidence type="ECO:0000255" key="1">
    <source>
        <dbReference type="HAMAP-Rule" id="MF_00366"/>
    </source>
</evidence>
<keyword id="KW-0240">DNA-directed RNA polymerase</keyword>
<keyword id="KW-0548">Nucleotidyltransferase</keyword>
<keyword id="KW-1185">Reference proteome</keyword>
<keyword id="KW-0804">Transcription</keyword>
<keyword id="KW-0808">Transferase</keyword>
<comment type="function">
    <text evidence="1">Promotes RNA polymerase assembly. Latches the N- and C-terminal regions of the beta' subunit thereby facilitating its interaction with the beta and alpha subunits.</text>
</comment>
<comment type="catalytic activity">
    <reaction evidence="1">
        <text>RNA(n) + a ribonucleoside 5'-triphosphate = RNA(n+1) + diphosphate</text>
        <dbReference type="Rhea" id="RHEA:21248"/>
        <dbReference type="Rhea" id="RHEA-COMP:14527"/>
        <dbReference type="Rhea" id="RHEA-COMP:17342"/>
        <dbReference type="ChEBI" id="CHEBI:33019"/>
        <dbReference type="ChEBI" id="CHEBI:61557"/>
        <dbReference type="ChEBI" id="CHEBI:140395"/>
        <dbReference type="EC" id="2.7.7.6"/>
    </reaction>
</comment>
<comment type="subunit">
    <text evidence="1">The RNAP catalytic core consists of 2 alpha, 1 beta, 1 beta' and 1 omega subunit. When a sigma factor is associated with the core the holoenzyme is formed, which can initiate transcription.</text>
</comment>
<comment type="similarity">
    <text evidence="1">Belongs to the RNA polymerase subunit omega family.</text>
</comment>
<protein>
    <recommendedName>
        <fullName evidence="1">DNA-directed RNA polymerase subunit omega</fullName>
        <shortName evidence="1">RNAP omega subunit</shortName>
        <ecNumber evidence="1">2.7.7.6</ecNumber>
    </recommendedName>
    <alternativeName>
        <fullName evidence="1">RNA polymerase omega subunit</fullName>
    </alternativeName>
    <alternativeName>
        <fullName evidence="1">Transcriptase subunit omega</fullName>
    </alternativeName>
</protein>
<feature type="chain" id="PRO_1000005877" description="DNA-directed RNA polymerase subunit omega">
    <location>
        <begin position="1"/>
        <end position="87"/>
    </location>
</feature>
<reference key="1">
    <citation type="journal article" date="2009" name="Genome Res.">
        <title>Complete genome of the cellulolytic thermophile Acidothermus cellulolyticus 11B provides insights into its ecophysiological and evolutionary adaptations.</title>
        <authorList>
            <person name="Barabote R.D."/>
            <person name="Xie G."/>
            <person name="Leu D.H."/>
            <person name="Normand P."/>
            <person name="Necsulea A."/>
            <person name="Daubin V."/>
            <person name="Medigue C."/>
            <person name="Adney W.S."/>
            <person name="Xu X.C."/>
            <person name="Lapidus A."/>
            <person name="Parales R.E."/>
            <person name="Detter C."/>
            <person name="Pujic P."/>
            <person name="Bruce D."/>
            <person name="Lavire C."/>
            <person name="Challacombe J.F."/>
            <person name="Brettin T.S."/>
            <person name="Berry A.M."/>
        </authorList>
    </citation>
    <scope>NUCLEOTIDE SEQUENCE [LARGE SCALE GENOMIC DNA]</scope>
    <source>
        <strain>ATCC 43068 / DSM 8971 / 11B</strain>
    </source>
</reference>
<accession>A0LUF4</accession>
<gene>
    <name evidence="1" type="primary">rpoZ</name>
    <name type="ordered locus">Acel_1292</name>
</gene>
<name>RPOZ_ACIC1</name>
<sequence>MAGTVAVPEGITNPPIDELLKVCDNKYALVIYAAKRARQINAYYAQLGEGLLEYVGPLVETYPTEKPLSIALREINAGLLTAEPIEQ</sequence>
<organism>
    <name type="scientific">Acidothermus cellulolyticus (strain ATCC 43068 / DSM 8971 / 11B)</name>
    <dbReference type="NCBI Taxonomy" id="351607"/>
    <lineage>
        <taxon>Bacteria</taxon>
        <taxon>Bacillati</taxon>
        <taxon>Actinomycetota</taxon>
        <taxon>Actinomycetes</taxon>
        <taxon>Acidothermales</taxon>
        <taxon>Acidothermaceae</taxon>
        <taxon>Acidothermus</taxon>
    </lineage>
</organism>